<accession>E9Q816</accession>
<proteinExistence type="evidence at transcript level"/>
<feature type="signal peptide" evidence="3">
    <location>
        <begin position="1"/>
        <end position="23"/>
    </location>
</feature>
<feature type="chain" id="PRO_0000431705" description="Cytochrome P450 2W1" evidence="3">
    <location>
        <begin position="24"/>
        <end position="493"/>
    </location>
</feature>
<feature type="binding site" description="axial binding residue" evidence="1">
    <location>
        <position position="436"/>
    </location>
    <ligand>
        <name>heme</name>
        <dbReference type="ChEBI" id="CHEBI:30413"/>
    </ligand>
    <ligandPart>
        <name>Fe</name>
        <dbReference type="ChEBI" id="CHEBI:18248"/>
    </ligandPart>
</feature>
<feature type="glycosylation site" description="N-linked (GlcNAc...) asparagine" evidence="3">
    <location>
        <position position="180"/>
    </location>
</feature>
<name>CP2W1_MOUSE</name>
<gene>
    <name type="primary">Cyp2w1</name>
</gene>
<organism>
    <name type="scientific">Mus musculus</name>
    <name type="common">Mouse</name>
    <dbReference type="NCBI Taxonomy" id="10090"/>
    <lineage>
        <taxon>Eukaryota</taxon>
        <taxon>Metazoa</taxon>
        <taxon>Chordata</taxon>
        <taxon>Craniata</taxon>
        <taxon>Vertebrata</taxon>
        <taxon>Euteleostomi</taxon>
        <taxon>Mammalia</taxon>
        <taxon>Eutheria</taxon>
        <taxon>Euarchontoglires</taxon>
        <taxon>Glires</taxon>
        <taxon>Rodentia</taxon>
        <taxon>Myomorpha</taxon>
        <taxon>Muroidea</taxon>
        <taxon>Muridae</taxon>
        <taxon>Murinae</taxon>
        <taxon>Mus</taxon>
        <taxon>Mus</taxon>
    </lineage>
</organism>
<dbReference type="EC" id="1.14.14.-" evidence="2"/>
<dbReference type="EMBL" id="AC161058">
    <property type="status" value="NOT_ANNOTATED_CDS"/>
    <property type="molecule type" value="Genomic_DNA"/>
</dbReference>
<dbReference type="CCDS" id="CCDS51683.1"/>
<dbReference type="RefSeq" id="NP_001153737.1">
    <property type="nucleotide sequence ID" value="NM_001160265.2"/>
</dbReference>
<dbReference type="SMR" id="E9Q816"/>
<dbReference type="FunCoup" id="E9Q816">
    <property type="interactions" value="126"/>
</dbReference>
<dbReference type="STRING" id="10090.ENSMUSP00000031521"/>
<dbReference type="GlyCosmos" id="E9Q816">
    <property type="glycosylation" value="1 site, No reported glycans"/>
</dbReference>
<dbReference type="GlyGen" id="E9Q816">
    <property type="glycosylation" value="1 site"/>
</dbReference>
<dbReference type="PhosphoSitePlus" id="E9Q816"/>
<dbReference type="jPOST" id="E9Q816"/>
<dbReference type="PaxDb" id="10090-ENSMUSP00000031521"/>
<dbReference type="ProteomicsDB" id="278011"/>
<dbReference type="Antibodypedia" id="1974">
    <property type="antibodies" value="213 antibodies from 29 providers"/>
</dbReference>
<dbReference type="Ensembl" id="ENSMUST00000031521.13">
    <property type="protein sequence ID" value="ENSMUSP00000031521.9"/>
    <property type="gene ID" value="ENSMUSG00000029541.13"/>
</dbReference>
<dbReference type="GeneID" id="545817"/>
<dbReference type="KEGG" id="mmu:545817"/>
<dbReference type="UCSC" id="uc012efv.1">
    <property type="organism name" value="mouse"/>
</dbReference>
<dbReference type="AGR" id="MGI:3616076"/>
<dbReference type="CTD" id="54905"/>
<dbReference type="MGI" id="MGI:3616076">
    <property type="gene designation" value="Cyp2w1"/>
</dbReference>
<dbReference type="VEuPathDB" id="HostDB:ENSMUSG00000029541"/>
<dbReference type="eggNOG" id="KOG0156">
    <property type="taxonomic scope" value="Eukaryota"/>
</dbReference>
<dbReference type="GeneTree" id="ENSGT00940000161956"/>
<dbReference type="HOGENOM" id="CLU_001570_22_3_1"/>
<dbReference type="InParanoid" id="E9Q816"/>
<dbReference type="OMA" id="WTLGTLH"/>
<dbReference type="OrthoDB" id="1844152at2759"/>
<dbReference type="PhylomeDB" id="E9Q816"/>
<dbReference type="TreeFam" id="TF352043"/>
<dbReference type="Reactome" id="R-MMU-211958">
    <property type="pathway name" value="Miscellaneous substrates"/>
</dbReference>
<dbReference type="Reactome" id="R-MMU-211981">
    <property type="pathway name" value="Xenobiotics"/>
</dbReference>
<dbReference type="BioGRID-ORCS" id="545817">
    <property type="hits" value="0 hits in 79 CRISPR screens"/>
</dbReference>
<dbReference type="PRO" id="PR:E9Q816"/>
<dbReference type="Proteomes" id="UP000000589">
    <property type="component" value="Chromosome 5"/>
</dbReference>
<dbReference type="RNAct" id="E9Q816">
    <property type="molecule type" value="protein"/>
</dbReference>
<dbReference type="Bgee" id="ENSMUSG00000029541">
    <property type="expression patterns" value="Expressed in lip and 14 other cell types or tissues"/>
</dbReference>
<dbReference type="ExpressionAtlas" id="E9Q816">
    <property type="expression patterns" value="baseline and differential"/>
</dbReference>
<dbReference type="GO" id="GO:0009986">
    <property type="term" value="C:cell surface"/>
    <property type="evidence" value="ECO:0000250"/>
    <property type="project" value="UniProtKB"/>
</dbReference>
<dbReference type="GO" id="GO:0005788">
    <property type="term" value="C:endoplasmic reticulum lumen"/>
    <property type="evidence" value="ECO:0000250"/>
    <property type="project" value="UniProtKB"/>
</dbReference>
<dbReference type="GO" id="GO:0005886">
    <property type="term" value="C:plasma membrane"/>
    <property type="evidence" value="ECO:0007669"/>
    <property type="project" value="UniProtKB-SubCell"/>
</dbReference>
<dbReference type="GO" id="GO:0005503">
    <property type="term" value="F:all-trans retinal binding"/>
    <property type="evidence" value="ECO:0000250"/>
    <property type="project" value="UniProtKB"/>
</dbReference>
<dbReference type="GO" id="GO:1904768">
    <property type="term" value="F:all-trans-retinol binding"/>
    <property type="evidence" value="ECO:0000250"/>
    <property type="project" value="UniProtKB"/>
</dbReference>
<dbReference type="GO" id="GO:0020037">
    <property type="term" value="F:heme binding"/>
    <property type="evidence" value="ECO:0007669"/>
    <property type="project" value="InterPro"/>
</dbReference>
<dbReference type="GO" id="GO:0005506">
    <property type="term" value="F:iron ion binding"/>
    <property type="evidence" value="ECO:0007669"/>
    <property type="project" value="InterPro"/>
</dbReference>
<dbReference type="GO" id="GO:0008401">
    <property type="term" value="F:retinoic acid 4-hydroxylase activity"/>
    <property type="evidence" value="ECO:0000250"/>
    <property type="project" value="UniProtKB"/>
</dbReference>
<dbReference type="GO" id="GO:0001972">
    <property type="term" value="F:retinoic acid binding"/>
    <property type="evidence" value="ECO:0000250"/>
    <property type="project" value="UniProtKB"/>
</dbReference>
<dbReference type="GO" id="GO:0046222">
    <property type="term" value="P:aflatoxin metabolic process"/>
    <property type="evidence" value="ECO:0000250"/>
    <property type="project" value="UniProtKB"/>
</dbReference>
<dbReference type="GO" id="GO:0006644">
    <property type="term" value="P:phospholipid metabolic process"/>
    <property type="evidence" value="ECO:0000250"/>
    <property type="project" value="UniProtKB"/>
</dbReference>
<dbReference type="GO" id="GO:0034653">
    <property type="term" value="P:retinoic acid catabolic process"/>
    <property type="evidence" value="ECO:0000250"/>
    <property type="project" value="UniProtKB"/>
</dbReference>
<dbReference type="GO" id="GO:0006805">
    <property type="term" value="P:xenobiotic metabolic process"/>
    <property type="evidence" value="ECO:0000250"/>
    <property type="project" value="UniProtKB"/>
</dbReference>
<dbReference type="FunFam" id="1.10.630.10:FF:000010">
    <property type="entry name" value="cytochrome P450 2W1 isoform X2"/>
    <property type="match status" value="1"/>
</dbReference>
<dbReference type="Gene3D" id="1.10.630.10">
    <property type="entry name" value="Cytochrome P450"/>
    <property type="match status" value="1"/>
</dbReference>
<dbReference type="InterPro" id="IPR001128">
    <property type="entry name" value="Cyt_P450"/>
</dbReference>
<dbReference type="InterPro" id="IPR017972">
    <property type="entry name" value="Cyt_P450_CS"/>
</dbReference>
<dbReference type="InterPro" id="IPR002401">
    <property type="entry name" value="Cyt_P450_E_grp-I"/>
</dbReference>
<dbReference type="InterPro" id="IPR036396">
    <property type="entry name" value="Cyt_P450_sf"/>
</dbReference>
<dbReference type="InterPro" id="IPR050182">
    <property type="entry name" value="Cytochrome_P450_fam2"/>
</dbReference>
<dbReference type="PANTHER" id="PTHR24300:SF291">
    <property type="entry name" value="CYTOCHROME P450 2W1"/>
    <property type="match status" value="1"/>
</dbReference>
<dbReference type="PANTHER" id="PTHR24300">
    <property type="entry name" value="CYTOCHROME P450 508A4-RELATED"/>
    <property type="match status" value="1"/>
</dbReference>
<dbReference type="Pfam" id="PF00067">
    <property type="entry name" value="p450"/>
    <property type="match status" value="1"/>
</dbReference>
<dbReference type="PRINTS" id="PR00463">
    <property type="entry name" value="EP450I"/>
</dbReference>
<dbReference type="PRINTS" id="PR00385">
    <property type="entry name" value="P450"/>
</dbReference>
<dbReference type="SUPFAM" id="SSF48264">
    <property type="entry name" value="Cytochrome P450"/>
    <property type="match status" value="1"/>
</dbReference>
<dbReference type="PROSITE" id="PS00086">
    <property type="entry name" value="CYTOCHROME_P450"/>
    <property type="match status" value="1"/>
</dbReference>
<evidence type="ECO:0000250" key="1">
    <source>
        <dbReference type="UniProtKB" id="Q6VVX0"/>
    </source>
</evidence>
<evidence type="ECO:0000250" key="2">
    <source>
        <dbReference type="UniProtKB" id="Q8TAV3"/>
    </source>
</evidence>
<evidence type="ECO:0000255" key="3"/>
<evidence type="ECO:0000255" key="4">
    <source>
        <dbReference type="RuleBase" id="RU000461"/>
    </source>
</evidence>
<evidence type="ECO:0000269" key="5">
    <source>
    </source>
</evidence>
<reference key="1">
    <citation type="journal article" date="2009" name="PLoS Biol.">
        <title>Lineage-specific biology revealed by a finished genome assembly of the mouse.</title>
        <authorList>
            <person name="Church D.M."/>
            <person name="Goodstadt L."/>
            <person name="Hillier L.W."/>
            <person name="Zody M.C."/>
            <person name="Goldstein S."/>
            <person name="She X."/>
            <person name="Bult C.J."/>
            <person name="Agarwala R."/>
            <person name="Cherry J.L."/>
            <person name="DiCuccio M."/>
            <person name="Hlavina W."/>
            <person name="Kapustin Y."/>
            <person name="Meric P."/>
            <person name="Maglott D."/>
            <person name="Birtle Z."/>
            <person name="Marques A.C."/>
            <person name="Graves T."/>
            <person name="Zhou S."/>
            <person name="Teague B."/>
            <person name="Potamousis K."/>
            <person name="Churas C."/>
            <person name="Place M."/>
            <person name="Herschleb J."/>
            <person name="Runnheim R."/>
            <person name="Forrest D."/>
            <person name="Amos-Landgraf J."/>
            <person name="Schwartz D.C."/>
            <person name="Cheng Z."/>
            <person name="Lindblad-Toh K."/>
            <person name="Eichler E.E."/>
            <person name="Ponting C.P."/>
        </authorList>
    </citation>
    <scope>NUCLEOTIDE SEQUENCE [LARGE SCALE GENOMIC DNA]</scope>
    <source>
        <strain>C57BL/6J</strain>
    </source>
</reference>
<reference key="2">
    <citation type="journal article" date="2011" name="Toxicol. Sci.">
        <title>Tissue distribution and gender-divergent expression of 78 cytochrome P450 mRNAs in mice.</title>
        <authorList>
            <person name="Renaud H.J."/>
            <person name="Cui J.Y."/>
            <person name="Khan M."/>
            <person name="Klaassen C.D."/>
        </authorList>
    </citation>
    <scope>TISSUE SPECIFICITY</scope>
</reference>
<protein>
    <recommendedName>
        <fullName>Cytochrome P450 2W1</fullName>
        <ecNumber evidence="2">1.14.14.-</ecNumber>
    </recommendedName>
</protein>
<keyword id="KW-1003">Cell membrane</keyword>
<keyword id="KW-0256">Endoplasmic reticulum</keyword>
<keyword id="KW-0325">Glycoprotein</keyword>
<keyword id="KW-0349">Heme</keyword>
<keyword id="KW-0408">Iron</keyword>
<keyword id="KW-0443">Lipid metabolism</keyword>
<keyword id="KW-0472">Membrane</keyword>
<keyword id="KW-0479">Metal-binding</keyword>
<keyword id="KW-0492">Microsome</keyword>
<keyword id="KW-0503">Monooxygenase</keyword>
<keyword id="KW-0560">Oxidoreductase</keyword>
<keyword id="KW-1185">Reference proteome</keyword>
<keyword id="KW-0732">Signal</keyword>
<comment type="function">
    <text evidence="2">A cytochrome P450 monooxygenase that may play a role in retinoid and phospholipid metabolism. Catalyzes the hydroxylation of saturated carbon hydrogen bonds. Hydroxylates all trans-retinoic acid (atRA) to 4-hydroxyretinoate and may regulate atRA clearance. Other retinoids such as all-trans retinol and all-trans retinal are potential endogenous substrates. Catalyzes both epoxidation of double bonds and hydroxylation of carbon hydrogen bonds of the fatty acyl chain of 1-acylphospholipids/2-lysophospholipids. Can metabolize various lysophospholipids classes including lysophosphatidylcholines (LPCs), lysophosphatidylinositols (LPIs), lysophosphatidylserines (LPSs), lysophosphatidylglycerols (LPGs), lysophosphatidylethanolamines (LPEs) and lysophosphatidic acids (LPAs). Has low or no activity toward 2-acylphospholipids/1-lysophospholipids, diacylphospholipids and free fatty acids. May play a role in tumorigenesis by activating procarcinogens such as aflatoxin B1, polycyclic aromatic hydrocarbon dihydrodiols and aromatic amines. Mechanistically, uses molecular oxygen inserting one oxygen atom into a substrate, and reducing the second into a water molecule, with two electrons provided by NADPH via cytochrome P450 reductase (CPR; NADPH-ferrihemoprotein reductase).</text>
</comment>
<comment type="catalytic activity">
    <reaction evidence="2">
        <text>all-trans-retinoate + reduced [NADPH--hemoprotein reductase] + O2 = all-trans-4-hydroxyretinoate + oxidized [NADPH--hemoprotein reductase] + H2O + H(+)</text>
        <dbReference type="Rhea" id="RHEA:51984"/>
        <dbReference type="Rhea" id="RHEA-COMP:11964"/>
        <dbReference type="Rhea" id="RHEA-COMP:11965"/>
        <dbReference type="ChEBI" id="CHEBI:15377"/>
        <dbReference type="ChEBI" id="CHEBI:15378"/>
        <dbReference type="ChEBI" id="CHEBI:15379"/>
        <dbReference type="ChEBI" id="CHEBI:35291"/>
        <dbReference type="ChEBI" id="CHEBI:57618"/>
        <dbReference type="ChEBI" id="CHEBI:58210"/>
        <dbReference type="ChEBI" id="CHEBI:134178"/>
    </reaction>
    <physiologicalReaction direction="left-to-right" evidence="2">
        <dbReference type="Rhea" id="RHEA:51985"/>
    </physiologicalReaction>
</comment>
<comment type="catalytic activity">
    <reaction evidence="2">
        <text>1-(9Z-octadecenoyl)-sn-glycero-3-phosphocholine + reduced [NADPH--hemoprotein reductase] + O2 = 1-[8-hydroxy-(9Z)-octadecenoyl]-sn-glycero-3-phosphocholine + oxidized [NADPH--hemoprotein reductase] + H2O + H(+)</text>
        <dbReference type="Rhea" id="RHEA:50328"/>
        <dbReference type="Rhea" id="RHEA-COMP:11964"/>
        <dbReference type="Rhea" id="RHEA-COMP:11965"/>
        <dbReference type="ChEBI" id="CHEBI:15377"/>
        <dbReference type="ChEBI" id="CHEBI:15378"/>
        <dbReference type="ChEBI" id="CHEBI:15379"/>
        <dbReference type="ChEBI" id="CHEBI:28610"/>
        <dbReference type="ChEBI" id="CHEBI:57618"/>
        <dbReference type="ChEBI" id="CHEBI:58210"/>
        <dbReference type="ChEBI" id="CHEBI:132285"/>
    </reaction>
    <physiologicalReaction direction="left-to-right" evidence="2">
        <dbReference type="Rhea" id="RHEA:50329"/>
    </physiologicalReaction>
</comment>
<comment type="catalytic activity">
    <reaction evidence="2">
        <text>1-(9Z-octadecenoyl)-sn-glycero-3-phosphocholine + reduced [NADPH--hemoprotein reductase] + O2 = 1-[11-hydroxy-(9Z)-octadecenoyl]-sn-glycero-3-phosphocholine + oxidized [NADPH--hemoprotein reductase] + H2O + H(+)</text>
        <dbReference type="Rhea" id="RHEA:50332"/>
        <dbReference type="Rhea" id="RHEA-COMP:11964"/>
        <dbReference type="Rhea" id="RHEA-COMP:11965"/>
        <dbReference type="ChEBI" id="CHEBI:15377"/>
        <dbReference type="ChEBI" id="CHEBI:15378"/>
        <dbReference type="ChEBI" id="CHEBI:15379"/>
        <dbReference type="ChEBI" id="CHEBI:28610"/>
        <dbReference type="ChEBI" id="CHEBI:57618"/>
        <dbReference type="ChEBI" id="CHEBI:58210"/>
        <dbReference type="ChEBI" id="CHEBI:132286"/>
    </reaction>
    <physiologicalReaction direction="left-to-right" evidence="2">
        <dbReference type="Rhea" id="RHEA:50333"/>
    </physiologicalReaction>
</comment>
<comment type="catalytic activity">
    <reaction evidence="2">
        <text>1-(9Z-octadecenoyl)-sn-glycero-3-phosphocholine + reduced [NADPH--hemoprotein reductase] + O2 = 1-[(9S,10R)-epoxy-octadecanoyl]-sn-glycero-3-phosphocholine + oxidized [NADPH--hemoprotein reductase] + H2O + H(+)</text>
        <dbReference type="Rhea" id="RHEA:50324"/>
        <dbReference type="Rhea" id="RHEA-COMP:11964"/>
        <dbReference type="Rhea" id="RHEA-COMP:11965"/>
        <dbReference type="ChEBI" id="CHEBI:15377"/>
        <dbReference type="ChEBI" id="CHEBI:15378"/>
        <dbReference type="ChEBI" id="CHEBI:15379"/>
        <dbReference type="ChEBI" id="CHEBI:28610"/>
        <dbReference type="ChEBI" id="CHEBI:57618"/>
        <dbReference type="ChEBI" id="CHEBI:58210"/>
        <dbReference type="ChEBI" id="CHEBI:132278"/>
    </reaction>
    <physiologicalReaction direction="left-to-right" evidence="2">
        <dbReference type="Rhea" id="RHEA:50325"/>
    </physiologicalReaction>
</comment>
<comment type="catalytic activity">
    <reaction evidence="2">
        <text>1-(9Z-octadecenoyl)-sn-glycero-3-phosphocholine + reduced [NADPH--hemoprotein reductase] + O2 = 1-[(9R,10S)-epoxy-octadecanoyl]-sn-glycero-3-phosphocholine + oxidized [NADPH--hemoprotein reductase] + H2O + H(+)</text>
        <dbReference type="Rhea" id="RHEA:50320"/>
        <dbReference type="Rhea" id="RHEA-COMP:11964"/>
        <dbReference type="Rhea" id="RHEA-COMP:11965"/>
        <dbReference type="ChEBI" id="CHEBI:15377"/>
        <dbReference type="ChEBI" id="CHEBI:15378"/>
        <dbReference type="ChEBI" id="CHEBI:15379"/>
        <dbReference type="ChEBI" id="CHEBI:28610"/>
        <dbReference type="ChEBI" id="CHEBI:57618"/>
        <dbReference type="ChEBI" id="CHEBI:58210"/>
        <dbReference type="ChEBI" id="CHEBI:132280"/>
    </reaction>
    <physiologicalReaction direction="left-to-right" evidence="2">
        <dbReference type="Rhea" id="RHEA:50321"/>
    </physiologicalReaction>
</comment>
<comment type="cofactor">
    <cofactor evidence="1">
        <name>heme</name>
        <dbReference type="ChEBI" id="CHEBI:30413"/>
    </cofactor>
</comment>
<comment type="subcellular location">
    <subcellularLocation>
        <location evidence="2">Endoplasmic reticulum lumen</location>
    </subcellularLocation>
    <subcellularLocation>
        <location evidence="2">Cell membrane</location>
    </subcellularLocation>
    <subcellularLocation>
        <location evidence="2">Microsome membrane</location>
    </subcellularLocation>
</comment>
<comment type="tissue specificity">
    <text evidence="5">Detected in colon, ileum, and testes.</text>
</comment>
<comment type="similarity">
    <text evidence="4">Belongs to the cytochrome P450 family.</text>
</comment>
<sequence length="493" mass="54438">MALLLLGVWGILLLLGLWGLLQGCTRSPSLAPRWPPGPRPLPFLGNLHLLGVTQQDRALMELSERYGPMFTIHLGSQKTVVLSGYEVVREALVGTGHELADRPPIPIFQHIQRGGGIFFSSGARWRAGRQFTVRTLQSLGVQQPSMVGKVLQELACLKGQLDSYGGQPLPLALLGWAPCNITFTLLFGQRFDYQDPVFVSLLSLIDQVMVLLGSPGIQLFNTFPRLGAFLRLHRPVLSKIEEVRTILRTLLETRRPPLPTGGPAQSYVEALLQQGQEDDPEDMFGEANVLACTLDMVMAGTETTAATLQWAVFLMVKHPHVQGRVQEELDRVLGPGQLPQPEHQRALPYTSAVLHEVQRYITLLPHVPRCTAADIQLGGYLLPKGTPVIPLLTSVLLDKTQWETPSQFNPNHFLDAKGRFMKRGAFLPFSAGRRVCVGKSLARTELFLLFAGLLQRYRLLPPPGLSPADLDLRPAPAFTMRPPAQTLCVVPRS</sequence>